<gene>
    <name type="ordered locus">Mhun_1010</name>
</gene>
<reference key="1">
    <citation type="journal article" date="2016" name="Stand. Genomic Sci.">
        <title>Complete genome sequence of Methanospirillum hungatei type strain JF1.</title>
        <authorList>
            <person name="Gunsalus R.P."/>
            <person name="Cook L.E."/>
            <person name="Crable B."/>
            <person name="Rohlin L."/>
            <person name="McDonald E."/>
            <person name="Mouttaki H."/>
            <person name="Sieber J.R."/>
            <person name="Poweleit N."/>
            <person name="Zhou H."/>
            <person name="Lapidus A.L."/>
            <person name="Daligault H.E."/>
            <person name="Land M."/>
            <person name="Gilna P."/>
            <person name="Ivanova N."/>
            <person name="Kyrpides N."/>
            <person name="Culley D.E."/>
            <person name="McInerney M.J."/>
        </authorList>
    </citation>
    <scope>NUCLEOTIDE SEQUENCE [LARGE SCALE GENOMIC DNA]</scope>
    <source>
        <strain>ATCC 27890 / DSM 864 / NBRC 100397 / JF-1</strain>
    </source>
</reference>
<organism>
    <name type="scientific">Methanospirillum hungatei JF-1 (strain ATCC 27890 / DSM 864 / NBRC 100397 / JF-1)</name>
    <dbReference type="NCBI Taxonomy" id="323259"/>
    <lineage>
        <taxon>Archaea</taxon>
        <taxon>Methanobacteriati</taxon>
        <taxon>Methanobacteriota</taxon>
        <taxon>Stenosarchaea group</taxon>
        <taxon>Methanomicrobia</taxon>
        <taxon>Methanomicrobiales</taxon>
        <taxon>Methanospirillaceae</taxon>
        <taxon>Methanospirillum</taxon>
    </lineage>
</organism>
<proteinExistence type="inferred from homology"/>
<keyword id="KW-0963">Cytoplasm</keyword>
<keyword id="KW-0444">Lipid biosynthesis</keyword>
<keyword id="KW-0443">Lipid metabolism</keyword>
<keyword id="KW-0460">Magnesium</keyword>
<keyword id="KW-0479">Metal-binding</keyword>
<keyword id="KW-0594">Phospholipid biosynthesis</keyword>
<keyword id="KW-1208">Phospholipid metabolism</keyword>
<keyword id="KW-1185">Reference proteome</keyword>
<keyword id="KW-0808">Transferase</keyword>
<comment type="function">
    <text evidence="1">Prenyltransferase that catalyzes the transfer of the geranylgeranyl moiety of geranylgeranyl diphosphate (GGPP) to the C3 hydroxyl of sn-glycerol-1-phosphate (G1P). This reaction is the first ether-bond-formation step in the biosynthesis of archaeal membrane lipids.</text>
</comment>
<comment type="catalytic activity">
    <reaction evidence="1">
        <text>sn-glycerol 1-phosphate + (2E,6E,10E)-geranylgeranyl diphosphate = sn-3-O-(geranylgeranyl)glycerol 1-phosphate + diphosphate</text>
        <dbReference type="Rhea" id="RHEA:23404"/>
        <dbReference type="ChEBI" id="CHEBI:33019"/>
        <dbReference type="ChEBI" id="CHEBI:57677"/>
        <dbReference type="ChEBI" id="CHEBI:57685"/>
        <dbReference type="ChEBI" id="CHEBI:58756"/>
        <dbReference type="EC" id="2.5.1.41"/>
    </reaction>
</comment>
<comment type="cofactor">
    <cofactor evidence="1">
        <name>Mg(2+)</name>
        <dbReference type="ChEBI" id="CHEBI:18420"/>
    </cofactor>
</comment>
<comment type="pathway">
    <text evidence="1">Membrane lipid metabolism; glycerophospholipid metabolism.</text>
</comment>
<comment type="subcellular location">
    <subcellularLocation>
        <location evidence="1">Cytoplasm</location>
    </subcellularLocation>
</comment>
<comment type="similarity">
    <text evidence="1">Belongs to the GGGP/HepGP synthase family. Group I subfamily.</text>
</comment>
<sequence length="228" mass="24972">MHTKWKTWAHVTKLDPDKHLTEDEIAEIATSGTDALILSGTLNITKDNMSQLRDQVKEYGLPLVVEPAGPESVIFHGIDLLYVASVMNTSDARWIVGKHRDWAMNPDIVWEKVIPEAYIVLNPNSAVGRVTGADCGISAEEVAAYASIADHYFKFPIVYIEYSGMYGNPDIVKRAGEAIDHAVLYYGGGIDSAEKAAEMAKYADTIVVGNAVYEKGVKTLLETVQAVQ</sequence>
<feature type="chain" id="PRO_0000350685" description="Geranylgeranylglyceryl phosphate synthase">
    <location>
        <begin position="1"/>
        <end position="228"/>
    </location>
</feature>
<feature type="binding site" evidence="1">
    <location>
        <position position="13"/>
    </location>
    <ligand>
        <name>sn-glycerol 1-phosphate</name>
        <dbReference type="ChEBI" id="CHEBI:57685"/>
    </ligand>
</feature>
<feature type="binding site" evidence="1">
    <location>
        <position position="15"/>
    </location>
    <ligand>
        <name>Mg(2+)</name>
        <dbReference type="ChEBI" id="CHEBI:18420"/>
    </ligand>
</feature>
<feature type="binding site" evidence="1">
    <location>
        <position position="41"/>
    </location>
    <ligand>
        <name>Mg(2+)</name>
        <dbReference type="ChEBI" id="CHEBI:18420"/>
    </ligand>
</feature>
<feature type="binding site" evidence="1">
    <location>
        <begin position="159"/>
        <end position="164"/>
    </location>
    <ligand>
        <name>sn-glycerol 1-phosphate</name>
        <dbReference type="ChEBI" id="CHEBI:57685"/>
    </ligand>
</feature>
<feature type="binding site" evidence="1">
    <location>
        <position position="189"/>
    </location>
    <ligand>
        <name>sn-glycerol 1-phosphate</name>
        <dbReference type="ChEBI" id="CHEBI:57685"/>
    </ligand>
</feature>
<feature type="binding site" evidence="1">
    <location>
        <begin position="209"/>
        <end position="210"/>
    </location>
    <ligand>
        <name>sn-glycerol 1-phosphate</name>
        <dbReference type="ChEBI" id="CHEBI:57685"/>
    </ligand>
</feature>
<name>GGGPS_METHJ</name>
<protein>
    <recommendedName>
        <fullName evidence="1">Geranylgeranylglyceryl phosphate synthase</fullName>
        <shortName evidence="1">GGGP synthase</shortName>
        <shortName evidence="1">GGGPS</shortName>
        <ecNumber evidence="1">2.5.1.41</ecNumber>
    </recommendedName>
    <alternativeName>
        <fullName evidence="1">(S)-3-O-geranylgeranylglyceryl phosphate synthase</fullName>
    </alternativeName>
    <alternativeName>
        <fullName evidence="1">Phosphoglycerol geranylgeranyltransferase</fullName>
    </alternativeName>
</protein>
<dbReference type="EC" id="2.5.1.41" evidence="1"/>
<dbReference type="EMBL" id="CP000254">
    <property type="protein sequence ID" value="ABD40760.1"/>
    <property type="molecule type" value="Genomic_DNA"/>
</dbReference>
<dbReference type="RefSeq" id="WP_011448039.1">
    <property type="nucleotide sequence ID" value="NC_007796.1"/>
</dbReference>
<dbReference type="SMR" id="Q2FQM4"/>
<dbReference type="STRING" id="323259.Mhun_1010"/>
<dbReference type="EnsemblBacteria" id="ABD40760">
    <property type="protein sequence ID" value="ABD40760"/>
    <property type="gene ID" value="Mhun_1010"/>
</dbReference>
<dbReference type="GeneID" id="3924778"/>
<dbReference type="KEGG" id="mhu:Mhun_1010"/>
<dbReference type="eggNOG" id="arCOG01085">
    <property type="taxonomic scope" value="Archaea"/>
</dbReference>
<dbReference type="HOGENOM" id="CLU_095211_0_0_2"/>
<dbReference type="InParanoid" id="Q2FQM4"/>
<dbReference type="OrthoDB" id="49758at2157"/>
<dbReference type="UniPathway" id="UPA00940"/>
<dbReference type="Proteomes" id="UP000001941">
    <property type="component" value="Chromosome"/>
</dbReference>
<dbReference type="GO" id="GO:0005737">
    <property type="term" value="C:cytoplasm"/>
    <property type="evidence" value="ECO:0007669"/>
    <property type="project" value="UniProtKB-SubCell"/>
</dbReference>
<dbReference type="GO" id="GO:0000287">
    <property type="term" value="F:magnesium ion binding"/>
    <property type="evidence" value="ECO:0007669"/>
    <property type="project" value="UniProtKB-UniRule"/>
</dbReference>
<dbReference type="GO" id="GO:0047294">
    <property type="term" value="F:phosphoglycerol geranylgeranyltransferase activity"/>
    <property type="evidence" value="ECO:0007669"/>
    <property type="project" value="UniProtKB-UniRule"/>
</dbReference>
<dbReference type="GO" id="GO:0046474">
    <property type="term" value="P:glycerophospholipid biosynthetic process"/>
    <property type="evidence" value="ECO:0007669"/>
    <property type="project" value="UniProtKB-UniRule"/>
</dbReference>
<dbReference type="CDD" id="cd02812">
    <property type="entry name" value="PcrB_like"/>
    <property type="match status" value="1"/>
</dbReference>
<dbReference type="Gene3D" id="3.20.20.390">
    <property type="entry name" value="FMN-linked oxidoreductases"/>
    <property type="match status" value="1"/>
</dbReference>
<dbReference type="HAMAP" id="MF_00112">
    <property type="entry name" value="GGGP_HepGP_synthase"/>
    <property type="match status" value="1"/>
</dbReference>
<dbReference type="InterPro" id="IPR039074">
    <property type="entry name" value="GGGP/HepGP_synthase_I"/>
</dbReference>
<dbReference type="InterPro" id="IPR038597">
    <property type="entry name" value="GGGP/HepGP_synthase_sf"/>
</dbReference>
<dbReference type="InterPro" id="IPR008205">
    <property type="entry name" value="GGGP_HepGP_synthase"/>
</dbReference>
<dbReference type="InterPro" id="IPR026438">
    <property type="entry name" value="GGGP_synthase_archaea"/>
</dbReference>
<dbReference type="NCBIfam" id="TIGR01768">
    <property type="entry name" value="GGGP-family"/>
    <property type="match status" value="1"/>
</dbReference>
<dbReference type="NCBIfam" id="TIGR04146">
    <property type="entry name" value="GGGPS_Afulg"/>
    <property type="match status" value="1"/>
</dbReference>
<dbReference type="NCBIfam" id="NF003199">
    <property type="entry name" value="PRK04169.1-3"/>
    <property type="match status" value="1"/>
</dbReference>
<dbReference type="PANTHER" id="PTHR40029">
    <property type="match status" value="1"/>
</dbReference>
<dbReference type="PANTHER" id="PTHR40029:SF2">
    <property type="entry name" value="HEPTAPRENYLGLYCERYL PHOSPHATE SYNTHASE"/>
    <property type="match status" value="1"/>
</dbReference>
<dbReference type="Pfam" id="PF01884">
    <property type="entry name" value="PcrB"/>
    <property type="match status" value="1"/>
</dbReference>
<dbReference type="SUPFAM" id="SSF51395">
    <property type="entry name" value="FMN-linked oxidoreductases"/>
    <property type="match status" value="1"/>
</dbReference>
<evidence type="ECO:0000255" key="1">
    <source>
        <dbReference type="HAMAP-Rule" id="MF_00112"/>
    </source>
</evidence>
<accession>Q2FQM4</accession>